<reference key="1">
    <citation type="journal article" date="2001" name="Nature">
        <title>Genome sequence of enterohaemorrhagic Escherichia coli O157:H7.</title>
        <authorList>
            <person name="Perna N.T."/>
            <person name="Plunkett G. III"/>
            <person name="Burland V."/>
            <person name="Mau B."/>
            <person name="Glasner J.D."/>
            <person name="Rose D.J."/>
            <person name="Mayhew G.F."/>
            <person name="Evans P.S."/>
            <person name="Gregor J."/>
            <person name="Kirkpatrick H.A."/>
            <person name="Posfai G."/>
            <person name="Hackett J."/>
            <person name="Klink S."/>
            <person name="Boutin A."/>
            <person name="Shao Y."/>
            <person name="Miller L."/>
            <person name="Grotbeck E.J."/>
            <person name="Davis N.W."/>
            <person name="Lim A."/>
            <person name="Dimalanta E.T."/>
            <person name="Potamousis K."/>
            <person name="Apodaca J."/>
            <person name="Anantharaman T.S."/>
            <person name="Lin J."/>
            <person name="Yen G."/>
            <person name="Schwartz D.C."/>
            <person name="Welch R.A."/>
            <person name="Blattner F.R."/>
        </authorList>
    </citation>
    <scope>NUCLEOTIDE SEQUENCE [LARGE SCALE GENOMIC DNA]</scope>
    <source>
        <strain>O157:H7 / EDL933 / ATCC 700927 / EHEC</strain>
    </source>
</reference>
<reference key="2">
    <citation type="journal article" date="2001" name="DNA Res.">
        <title>Complete genome sequence of enterohemorrhagic Escherichia coli O157:H7 and genomic comparison with a laboratory strain K-12.</title>
        <authorList>
            <person name="Hayashi T."/>
            <person name="Makino K."/>
            <person name="Ohnishi M."/>
            <person name="Kurokawa K."/>
            <person name="Ishii K."/>
            <person name="Yokoyama K."/>
            <person name="Han C.-G."/>
            <person name="Ohtsubo E."/>
            <person name="Nakayama K."/>
            <person name="Murata T."/>
            <person name="Tanaka M."/>
            <person name="Tobe T."/>
            <person name="Iida T."/>
            <person name="Takami H."/>
            <person name="Honda T."/>
            <person name="Sasakawa C."/>
            <person name="Ogasawara N."/>
            <person name="Yasunaga T."/>
            <person name="Kuhara S."/>
            <person name="Shiba T."/>
            <person name="Hattori M."/>
            <person name="Shinagawa H."/>
        </authorList>
    </citation>
    <scope>NUCLEOTIDE SEQUENCE [LARGE SCALE GENOMIC DNA]</scope>
    <source>
        <strain>O157:H7 / Sakai / RIMD 0509952 / EHEC</strain>
    </source>
</reference>
<name>RLUE_ECO57</name>
<gene>
    <name type="primary">rluE</name>
    <name type="ordered locus">Z1864</name>
    <name type="ordered locus">ECs1607</name>
</gene>
<proteinExistence type="inferred from homology"/>
<dbReference type="EC" id="5.4.99.20"/>
<dbReference type="EMBL" id="AE005174">
    <property type="protein sequence ID" value="AAG55961.1"/>
    <property type="status" value="ALT_INIT"/>
    <property type="molecule type" value="Genomic_DNA"/>
</dbReference>
<dbReference type="EMBL" id="BA000007">
    <property type="protein sequence ID" value="BAB35030.1"/>
    <property type="molecule type" value="Genomic_DNA"/>
</dbReference>
<dbReference type="PIR" id="E85687">
    <property type="entry name" value="E85687"/>
</dbReference>
<dbReference type="PIR" id="G90829">
    <property type="entry name" value="G90829"/>
</dbReference>
<dbReference type="RefSeq" id="NP_309634.3">
    <property type="nucleotide sequence ID" value="NC_002695.1"/>
</dbReference>
<dbReference type="RefSeq" id="WP_001248690.1">
    <property type="nucleotide sequence ID" value="NZ_VOAI01000035.1"/>
</dbReference>
<dbReference type="SMR" id="Q8X724"/>
<dbReference type="STRING" id="155864.Z1864"/>
<dbReference type="GeneID" id="913282"/>
<dbReference type="KEGG" id="ece:Z1864"/>
<dbReference type="KEGG" id="ecs:ECs_1607"/>
<dbReference type="PATRIC" id="fig|386585.9.peg.1707"/>
<dbReference type="eggNOG" id="COG1187">
    <property type="taxonomic scope" value="Bacteria"/>
</dbReference>
<dbReference type="HOGENOM" id="CLU_024979_8_0_6"/>
<dbReference type="OMA" id="HPRTYWV"/>
<dbReference type="Proteomes" id="UP000000558">
    <property type="component" value="Chromosome"/>
</dbReference>
<dbReference type="Proteomes" id="UP000002519">
    <property type="component" value="Chromosome"/>
</dbReference>
<dbReference type="GO" id="GO:0160137">
    <property type="term" value="F:23S rRNA pseudouridine(2457) synthase activity"/>
    <property type="evidence" value="ECO:0007669"/>
    <property type="project" value="UniProtKB-EC"/>
</dbReference>
<dbReference type="GO" id="GO:0003723">
    <property type="term" value="F:RNA binding"/>
    <property type="evidence" value="ECO:0007669"/>
    <property type="project" value="InterPro"/>
</dbReference>
<dbReference type="GO" id="GO:0001522">
    <property type="term" value="P:pseudouridine synthesis"/>
    <property type="evidence" value="ECO:0007669"/>
    <property type="project" value="InterPro"/>
</dbReference>
<dbReference type="GO" id="GO:0006364">
    <property type="term" value="P:rRNA processing"/>
    <property type="evidence" value="ECO:0007669"/>
    <property type="project" value="UniProtKB-KW"/>
</dbReference>
<dbReference type="CDD" id="cd02566">
    <property type="entry name" value="PseudoU_synth_RluE"/>
    <property type="match status" value="1"/>
</dbReference>
<dbReference type="FunFam" id="3.30.70.1560:FF:000003">
    <property type="entry name" value="Pseudouridine synthase"/>
    <property type="match status" value="1"/>
</dbReference>
<dbReference type="FunFam" id="3.30.70.580:FF:000010">
    <property type="entry name" value="Pseudouridine synthase"/>
    <property type="match status" value="1"/>
</dbReference>
<dbReference type="Gene3D" id="3.30.70.1560">
    <property type="entry name" value="Alpha-L RNA-binding motif"/>
    <property type="match status" value="1"/>
</dbReference>
<dbReference type="Gene3D" id="3.30.70.580">
    <property type="entry name" value="Pseudouridine synthase I, catalytic domain, N-terminal subdomain"/>
    <property type="match status" value="1"/>
</dbReference>
<dbReference type="InterPro" id="IPR042092">
    <property type="entry name" value="PsdUridine_s_RsuA/RluB/E/F_cat"/>
</dbReference>
<dbReference type="InterPro" id="IPR020103">
    <property type="entry name" value="PsdUridine_synth_cat_dom_sf"/>
</dbReference>
<dbReference type="InterPro" id="IPR006145">
    <property type="entry name" value="PsdUridine_synth_RsuA/RluA"/>
</dbReference>
<dbReference type="InterPro" id="IPR000748">
    <property type="entry name" value="PsdUridine_synth_RsuA/RluB/E/F"/>
</dbReference>
<dbReference type="InterPro" id="IPR018496">
    <property type="entry name" value="PsdUridine_synth_RsuA/RluB_CS"/>
</dbReference>
<dbReference type="InterPro" id="IPR050343">
    <property type="entry name" value="RsuA_PseudoU_synthase"/>
</dbReference>
<dbReference type="InterPro" id="IPR020094">
    <property type="entry name" value="TruA/RsuA/RluB/E/F_N"/>
</dbReference>
<dbReference type="NCBIfam" id="NF008487">
    <property type="entry name" value="PRK11394.1"/>
    <property type="match status" value="1"/>
</dbReference>
<dbReference type="NCBIfam" id="TIGR00093">
    <property type="entry name" value="pseudouridine synthase"/>
    <property type="match status" value="1"/>
</dbReference>
<dbReference type="PANTHER" id="PTHR47683">
    <property type="entry name" value="PSEUDOURIDINE SYNTHASE FAMILY PROTEIN-RELATED"/>
    <property type="match status" value="1"/>
</dbReference>
<dbReference type="PANTHER" id="PTHR47683:SF2">
    <property type="entry name" value="RNA-BINDING S4 DOMAIN-CONTAINING PROTEIN"/>
    <property type="match status" value="1"/>
</dbReference>
<dbReference type="Pfam" id="PF00849">
    <property type="entry name" value="PseudoU_synth_2"/>
    <property type="match status" value="1"/>
</dbReference>
<dbReference type="SUPFAM" id="SSF55120">
    <property type="entry name" value="Pseudouridine synthase"/>
    <property type="match status" value="1"/>
</dbReference>
<dbReference type="PROSITE" id="PS01149">
    <property type="entry name" value="PSI_RSU"/>
    <property type="match status" value="1"/>
</dbReference>
<organism>
    <name type="scientific">Escherichia coli O157:H7</name>
    <dbReference type="NCBI Taxonomy" id="83334"/>
    <lineage>
        <taxon>Bacteria</taxon>
        <taxon>Pseudomonadati</taxon>
        <taxon>Pseudomonadota</taxon>
        <taxon>Gammaproteobacteria</taxon>
        <taxon>Enterobacterales</taxon>
        <taxon>Enterobacteriaceae</taxon>
        <taxon>Escherichia</taxon>
    </lineage>
</organism>
<keyword id="KW-0413">Isomerase</keyword>
<keyword id="KW-1185">Reference proteome</keyword>
<keyword id="KW-0698">rRNA processing</keyword>
<sequence>MRQFIISENTMQKTSFRNHQVKRFSSQRSTRRKPENQPTRVILFNKPYDVLPQFTDEAGRKTLKEFIPVQGVYAAGRLDRDSEGLLVLTNNGALQARLTQPGKRTGKIYYVQVEGIPTQDALEALRNGVTLNDGPTLPAGAELVDEPAWLWPRNPPIRERKSIPTSWLKITLYEGRNRQVRRMTAHVGFPTLRLIRYAMGDYSLDNLANGEWREATE</sequence>
<protein>
    <recommendedName>
        <fullName>Ribosomal large subunit pseudouridine synthase E</fullName>
        <ecNumber>5.4.99.20</ecNumber>
    </recommendedName>
    <alternativeName>
        <fullName>rRNA pseudouridylate synthase E</fullName>
    </alternativeName>
    <alternativeName>
        <fullName>rRNA-uridine isomerase E</fullName>
    </alternativeName>
</protein>
<accession>Q8X724</accession>
<evidence type="ECO:0000250" key="1"/>
<evidence type="ECO:0000256" key="2">
    <source>
        <dbReference type="SAM" id="MobiDB-lite"/>
    </source>
</evidence>
<evidence type="ECO:0000305" key="3"/>
<feature type="chain" id="PRO_0000100003" description="Ribosomal large subunit pseudouridine synthase E">
    <location>
        <begin position="1"/>
        <end position="217"/>
    </location>
</feature>
<feature type="region of interest" description="Disordered" evidence="2">
    <location>
        <begin position="19"/>
        <end position="38"/>
    </location>
</feature>
<feature type="compositionally biased region" description="Polar residues" evidence="2">
    <location>
        <begin position="19"/>
        <end position="28"/>
    </location>
</feature>
<feature type="active site" description="Nucleophile" evidence="1">
    <location>
        <position position="79"/>
    </location>
</feature>
<comment type="function">
    <text evidence="1">Responsible for synthesis of pseudouridine from uracil-2457 in 23S ribosomal RNA.</text>
</comment>
<comment type="catalytic activity">
    <reaction>
        <text>uridine(2457) in 23S rRNA = pseudouridine(2457) in 23S rRNA</text>
        <dbReference type="Rhea" id="RHEA:38871"/>
        <dbReference type="Rhea" id="RHEA-COMP:10091"/>
        <dbReference type="Rhea" id="RHEA-COMP:10092"/>
        <dbReference type="ChEBI" id="CHEBI:65314"/>
        <dbReference type="ChEBI" id="CHEBI:65315"/>
        <dbReference type="EC" id="5.4.99.20"/>
    </reaction>
</comment>
<comment type="similarity">
    <text evidence="3">Belongs to the pseudouridine synthase RsuA family.</text>
</comment>
<comment type="sequence caution" evidence="3">
    <conflict type="erroneous initiation">
        <sequence resource="EMBL-CDS" id="AAG55961"/>
    </conflict>
</comment>